<name>MTND_GRABC</name>
<dbReference type="EC" id="1.13.11.54" evidence="1"/>
<dbReference type="EC" id="1.13.11.53" evidence="1"/>
<dbReference type="EMBL" id="CP000394">
    <property type="protein sequence ID" value="ABI63164.1"/>
    <property type="molecule type" value="Genomic_DNA"/>
</dbReference>
<dbReference type="RefSeq" id="WP_011632966.1">
    <property type="nucleotide sequence ID" value="NC_008343.2"/>
</dbReference>
<dbReference type="SMR" id="Q0BPT8"/>
<dbReference type="STRING" id="391165.GbCGDNIH1_2266"/>
<dbReference type="KEGG" id="gbe:GbCGDNIH1_2266"/>
<dbReference type="eggNOG" id="COG1791">
    <property type="taxonomic scope" value="Bacteria"/>
</dbReference>
<dbReference type="HOGENOM" id="CLU_125400_0_0_5"/>
<dbReference type="OrthoDB" id="9795636at2"/>
<dbReference type="UniPathway" id="UPA00904">
    <property type="reaction ID" value="UER00878"/>
</dbReference>
<dbReference type="Proteomes" id="UP000001963">
    <property type="component" value="Chromosome"/>
</dbReference>
<dbReference type="GO" id="GO:0010308">
    <property type="term" value="F:acireductone dioxygenase (Ni2+-requiring) activity"/>
    <property type="evidence" value="ECO:0007669"/>
    <property type="project" value="UniProtKB-UniRule"/>
</dbReference>
<dbReference type="GO" id="GO:0010309">
    <property type="term" value="F:acireductone dioxygenase [iron(II)-requiring] activity"/>
    <property type="evidence" value="ECO:0007669"/>
    <property type="project" value="UniProtKB-UniRule"/>
</dbReference>
<dbReference type="GO" id="GO:0005506">
    <property type="term" value="F:iron ion binding"/>
    <property type="evidence" value="ECO:0007669"/>
    <property type="project" value="UniProtKB-UniRule"/>
</dbReference>
<dbReference type="GO" id="GO:0016151">
    <property type="term" value="F:nickel cation binding"/>
    <property type="evidence" value="ECO:0007669"/>
    <property type="project" value="UniProtKB-UniRule"/>
</dbReference>
<dbReference type="GO" id="GO:0019509">
    <property type="term" value="P:L-methionine salvage from methylthioadenosine"/>
    <property type="evidence" value="ECO:0007669"/>
    <property type="project" value="UniProtKB-UniRule"/>
</dbReference>
<dbReference type="GO" id="GO:0019284">
    <property type="term" value="P:L-methionine salvage from S-adenosylmethionine"/>
    <property type="evidence" value="ECO:0007669"/>
    <property type="project" value="InterPro"/>
</dbReference>
<dbReference type="CDD" id="cd02232">
    <property type="entry name" value="cupin_ARD"/>
    <property type="match status" value="1"/>
</dbReference>
<dbReference type="Gene3D" id="2.60.120.10">
    <property type="entry name" value="Jelly Rolls"/>
    <property type="match status" value="1"/>
</dbReference>
<dbReference type="HAMAP" id="MF_01682">
    <property type="entry name" value="Salvage_MtnD"/>
    <property type="match status" value="1"/>
</dbReference>
<dbReference type="InterPro" id="IPR004313">
    <property type="entry name" value="ARD"/>
</dbReference>
<dbReference type="InterPro" id="IPR023956">
    <property type="entry name" value="ARD_bac"/>
</dbReference>
<dbReference type="InterPro" id="IPR014710">
    <property type="entry name" value="RmlC-like_jellyroll"/>
</dbReference>
<dbReference type="InterPro" id="IPR011051">
    <property type="entry name" value="RmlC_Cupin_sf"/>
</dbReference>
<dbReference type="PANTHER" id="PTHR23418">
    <property type="entry name" value="ACIREDUCTONE DIOXYGENASE"/>
    <property type="match status" value="1"/>
</dbReference>
<dbReference type="PANTHER" id="PTHR23418:SF0">
    <property type="entry name" value="ACIREDUCTONE DIOXYGENASE"/>
    <property type="match status" value="1"/>
</dbReference>
<dbReference type="Pfam" id="PF03079">
    <property type="entry name" value="ARD"/>
    <property type="match status" value="1"/>
</dbReference>
<dbReference type="SUPFAM" id="SSF51182">
    <property type="entry name" value="RmlC-like cupins"/>
    <property type="match status" value="1"/>
</dbReference>
<keyword id="KW-0028">Amino-acid biosynthesis</keyword>
<keyword id="KW-0223">Dioxygenase</keyword>
<keyword id="KW-0408">Iron</keyword>
<keyword id="KW-0479">Metal-binding</keyword>
<keyword id="KW-0486">Methionine biosynthesis</keyword>
<keyword id="KW-0533">Nickel</keyword>
<keyword id="KW-0560">Oxidoreductase</keyword>
<keyword id="KW-1185">Reference proteome</keyword>
<reference key="1">
    <citation type="journal article" date="2007" name="J. Bacteriol.">
        <title>Genome sequence analysis of the emerging human pathogenic acetic acid bacterium Granulibacter bethesdensis.</title>
        <authorList>
            <person name="Greenberg D.E."/>
            <person name="Porcella S.F."/>
            <person name="Zelazny A.M."/>
            <person name="Virtaneva K."/>
            <person name="Sturdevant D.E."/>
            <person name="Kupko J.J. III"/>
            <person name="Barbian K.D."/>
            <person name="Babar A."/>
            <person name="Dorward D.W."/>
            <person name="Holland S.M."/>
        </authorList>
    </citation>
    <scope>NUCLEOTIDE SEQUENCE [LARGE SCALE GENOMIC DNA]</scope>
    <source>
        <strain>ATCC BAA-1260 / CGDNIH1</strain>
    </source>
</reference>
<feature type="chain" id="PRO_0000359197" description="Acireductone dioxygenase">
    <location>
        <begin position="1"/>
        <end position="179"/>
    </location>
</feature>
<feature type="binding site" evidence="1">
    <location>
        <position position="97"/>
    </location>
    <ligand>
        <name>Fe(2+)</name>
        <dbReference type="ChEBI" id="CHEBI:29033"/>
    </ligand>
</feature>
<feature type="binding site" evidence="1">
    <location>
        <position position="97"/>
    </location>
    <ligand>
        <name>Ni(2+)</name>
        <dbReference type="ChEBI" id="CHEBI:49786"/>
    </ligand>
</feature>
<feature type="binding site" evidence="1">
    <location>
        <position position="99"/>
    </location>
    <ligand>
        <name>Fe(2+)</name>
        <dbReference type="ChEBI" id="CHEBI:29033"/>
    </ligand>
</feature>
<feature type="binding site" evidence="1">
    <location>
        <position position="99"/>
    </location>
    <ligand>
        <name>Ni(2+)</name>
        <dbReference type="ChEBI" id="CHEBI:49786"/>
    </ligand>
</feature>
<feature type="binding site" evidence="1">
    <location>
        <position position="103"/>
    </location>
    <ligand>
        <name>Fe(2+)</name>
        <dbReference type="ChEBI" id="CHEBI:29033"/>
    </ligand>
</feature>
<feature type="binding site" evidence="1">
    <location>
        <position position="103"/>
    </location>
    <ligand>
        <name>Ni(2+)</name>
        <dbReference type="ChEBI" id="CHEBI:49786"/>
    </ligand>
</feature>
<feature type="binding site" evidence="1">
    <location>
        <position position="141"/>
    </location>
    <ligand>
        <name>Fe(2+)</name>
        <dbReference type="ChEBI" id="CHEBI:29033"/>
    </ligand>
</feature>
<feature type="binding site" evidence="1">
    <location>
        <position position="141"/>
    </location>
    <ligand>
        <name>Ni(2+)</name>
        <dbReference type="ChEBI" id="CHEBI:49786"/>
    </ligand>
</feature>
<feature type="site" description="May play a role in metal incorporation in vivo" evidence="1">
    <location>
        <position position="96"/>
    </location>
</feature>
<feature type="site" description="May play a role in transmitting local conformational changes" evidence="1">
    <location>
        <position position="102"/>
    </location>
</feature>
<feature type="site" description="Important to generate the dianion" evidence="1">
    <location>
        <position position="105"/>
    </location>
</feature>
<gene>
    <name evidence="1" type="primary">mtnD</name>
    <name type="ordered locus">GbCGDNIH1_2266</name>
</gene>
<sequence>MSRLTIYADSTPDAPLLRTEDPERIAQELSSIGVRFERWSSAVTPSPDDDEATILAAYRPYLNALMGETGAGTADVIRLRPDTPNLPALRQKFLSEHTHTEDEVRFFVHGSGNFILHVDDRVYDAHCTQGDLISVPTGIKHWFDAGETPFVTALRVFTDTTGWVAHYTGDPIADHFPAA</sequence>
<accession>Q0BPT8</accession>
<comment type="function">
    <text evidence="1">Catalyzes 2 different reactions between oxygen and the acireductone 1,2-dihydroxy-3-keto-5-methylthiopentene (DHK-MTPene) depending upon the metal bound in the active site. Fe-containing acireductone dioxygenase (Fe-ARD) produces formate and 2-keto-4-methylthiobutyrate (KMTB), the alpha-ketoacid precursor of methionine in the methionine recycle pathway. Ni-containing acireductone dioxygenase (Ni-ARD) produces methylthiopropionate, carbon monoxide and formate, and does not lie on the methionine recycle pathway.</text>
</comment>
<comment type="catalytic activity">
    <reaction evidence="1">
        <text>1,2-dihydroxy-5-(methylsulfanyl)pent-1-en-3-one + O2 = 3-(methylsulfanyl)propanoate + CO + formate + 2 H(+)</text>
        <dbReference type="Rhea" id="RHEA:14161"/>
        <dbReference type="ChEBI" id="CHEBI:15378"/>
        <dbReference type="ChEBI" id="CHEBI:15379"/>
        <dbReference type="ChEBI" id="CHEBI:15740"/>
        <dbReference type="ChEBI" id="CHEBI:17245"/>
        <dbReference type="ChEBI" id="CHEBI:49016"/>
        <dbReference type="ChEBI" id="CHEBI:49252"/>
        <dbReference type="EC" id="1.13.11.53"/>
    </reaction>
</comment>
<comment type="catalytic activity">
    <reaction evidence="1">
        <text>1,2-dihydroxy-5-(methylsulfanyl)pent-1-en-3-one + O2 = 4-methylsulfanyl-2-oxobutanoate + formate + 2 H(+)</text>
        <dbReference type="Rhea" id="RHEA:24504"/>
        <dbReference type="ChEBI" id="CHEBI:15378"/>
        <dbReference type="ChEBI" id="CHEBI:15379"/>
        <dbReference type="ChEBI" id="CHEBI:15740"/>
        <dbReference type="ChEBI" id="CHEBI:16723"/>
        <dbReference type="ChEBI" id="CHEBI:49252"/>
        <dbReference type="EC" id="1.13.11.54"/>
    </reaction>
</comment>
<comment type="cofactor">
    <cofactor evidence="1">
        <name>Fe(2+)</name>
        <dbReference type="ChEBI" id="CHEBI:29033"/>
    </cofactor>
    <text evidence="1">Binds 1 Fe(2+) cation per monomer.</text>
</comment>
<comment type="cofactor">
    <cofactor evidence="1">
        <name>Ni(2+)</name>
        <dbReference type="ChEBI" id="CHEBI:49786"/>
    </cofactor>
    <text evidence="1">Binds 1 nickel ion per monomer.</text>
</comment>
<comment type="pathway">
    <text evidence="1">Amino-acid biosynthesis; L-methionine biosynthesis via salvage pathway; L-methionine from S-methyl-5-thio-alpha-D-ribose 1-phosphate: step 5/6.</text>
</comment>
<comment type="subunit">
    <text evidence="1">Monomer.</text>
</comment>
<comment type="similarity">
    <text evidence="1">Belongs to the acireductone dioxygenase (ARD) family.</text>
</comment>
<evidence type="ECO:0000255" key="1">
    <source>
        <dbReference type="HAMAP-Rule" id="MF_01682"/>
    </source>
</evidence>
<proteinExistence type="inferred from homology"/>
<organism>
    <name type="scientific">Granulibacter bethesdensis (strain ATCC BAA-1260 / CGDNIH1)</name>
    <dbReference type="NCBI Taxonomy" id="391165"/>
    <lineage>
        <taxon>Bacteria</taxon>
        <taxon>Pseudomonadati</taxon>
        <taxon>Pseudomonadota</taxon>
        <taxon>Alphaproteobacteria</taxon>
        <taxon>Acetobacterales</taxon>
        <taxon>Acetobacteraceae</taxon>
        <taxon>Granulibacter</taxon>
    </lineage>
</organism>
<protein>
    <recommendedName>
        <fullName evidence="1">Acireductone dioxygenase</fullName>
    </recommendedName>
    <alternativeName>
        <fullName evidence="1">1,2-dihydroxy-3-keto-5-methylthiopentene dioxygenase</fullName>
        <shortName evidence="1">DHK-MTPene dioxygenase</shortName>
    </alternativeName>
    <alternativeName>
        <fullName evidence="1">Acireductone dioxygenase (Fe(2+)-requiring)</fullName>
        <shortName evidence="1">ARD'</shortName>
        <shortName evidence="1">Fe-ARD</shortName>
        <ecNumber evidence="1">1.13.11.54</ecNumber>
    </alternativeName>
    <alternativeName>
        <fullName evidence="1">Acireductone dioxygenase (Ni(2+)-requiring)</fullName>
        <shortName evidence="1">ARD</shortName>
        <shortName evidence="1">Ni-ARD</shortName>
        <ecNumber evidence="1">1.13.11.53</ecNumber>
    </alternativeName>
</protein>